<evidence type="ECO:0000255" key="1">
    <source>
        <dbReference type="HAMAP-Rule" id="MF_01039"/>
    </source>
</evidence>
<accession>Q324G4</accession>
<comment type="function">
    <text evidence="1">Catalyzes the interconversion of 2-phosphoglycerate and 3-phosphoglycerate.</text>
</comment>
<comment type="catalytic activity">
    <reaction evidence="1">
        <text>(2R)-2-phosphoglycerate = (2R)-3-phosphoglycerate</text>
        <dbReference type="Rhea" id="RHEA:15901"/>
        <dbReference type="ChEBI" id="CHEBI:58272"/>
        <dbReference type="ChEBI" id="CHEBI:58289"/>
        <dbReference type="EC" id="5.4.2.11"/>
    </reaction>
</comment>
<comment type="pathway">
    <text evidence="1">Carbohydrate degradation; glycolysis; pyruvate from D-glyceraldehyde 3-phosphate: step 3/5.</text>
</comment>
<comment type="subunit">
    <text evidence="1">Homodimer.</text>
</comment>
<comment type="similarity">
    <text evidence="1">Belongs to the phosphoglycerate mutase family. BPG-dependent PGAM subfamily.</text>
</comment>
<sequence>MAVTKLVLVRHGESQWNKENRFTGWYDVDLSEKGVSEAKAAGKLLKEEGYSFDFAYTSVLKRAIHTLWNVLDELDQAWLPVEKSWKLNERHYGALQGLNKAETAEKYGDEQVKQWRRGFAVTPPELTKDDERYPGHDPRYAKLSEKELPLTESLALTIDRVIPYWNETILPRMKSGERVIIAAHGNSLRALVKYLDNMSEEEILELNIPTGVPLVYEFDENFKPLKRYYLGNADEIAAKAAAVANQGKAK</sequence>
<proteinExistence type="inferred from homology"/>
<protein>
    <recommendedName>
        <fullName evidence="1">2,3-bisphosphoglycerate-dependent phosphoglycerate mutase</fullName>
        <shortName evidence="1">BPG-dependent PGAM</shortName>
        <shortName evidence="1">PGAM</shortName>
        <shortName evidence="1">Phosphoglyceromutase</shortName>
        <shortName evidence="1">dPGM</shortName>
        <ecNumber evidence="1">5.4.2.11</ecNumber>
    </recommendedName>
</protein>
<reference key="1">
    <citation type="journal article" date="2005" name="Nucleic Acids Res.">
        <title>Genome dynamics and diversity of Shigella species, the etiologic agents of bacillary dysentery.</title>
        <authorList>
            <person name="Yang F."/>
            <person name="Yang J."/>
            <person name="Zhang X."/>
            <person name="Chen L."/>
            <person name="Jiang Y."/>
            <person name="Yan Y."/>
            <person name="Tang X."/>
            <person name="Wang J."/>
            <person name="Xiong Z."/>
            <person name="Dong J."/>
            <person name="Xue Y."/>
            <person name="Zhu Y."/>
            <person name="Xu X."/>
            <person name="Sun L."/>
            <person name="Chen S."/>
            <person name="Nie H."/>
            <person name="Peng J."/>
            <person name="Xu J."/>
            <person name="Wang Y."/>
            <person name="Yuan Z."/>
            <person name="Wen Y."/>
            <person name="Yao Z."/>
            <person name="Shen Y."/>
            <person name="Qiang B."/>
            <person name="Hou Y."/>
            <person name="Yu J."/>
            <person name="Jin Q."/>
        </authorList>
    </citation>
    <scope>NUCLEOTIDE SEQUENCE [LARGE SCALE GENOMIC DNA]</scope>
    <source>
        <strain>Sb227</strain>
    </source>
</reference>
<organism>
    <name type="scientific">Shigella boydii serotype 4 (strain Sb227)</name>
    <dbReference type="NCBI Taxonomy" id="300268"/>
    <lineage>
        <taxon>Bacteria</taxon>
        <taxon>Pseudomonadati</taxon>
        <taxon>Pseudomonadota</taxon>
        <taxon>Gammaproteobacteria</taxon>
        <taxon>Enterobacterales</taxon>
        <taxon>Enterobacteriaceae</taxon>
        <taxon>Shigella</taxon>
    </lineage>
</organism>
<keyword id="KW-0312">Gluconeogenesis</keyword>
<keyword id="KW-0324">Glycolysis</keyword>
<keyword id="KW-0413">Isomerase</keyword>
<name>GPMA_SHIBS</name>
<dbReference type="EC" id="5.4.2.11" evidence="1"/>
<dbReference type="EMBL" id="CP000036">
    <property type="protein sequence ID" value="ABB65294.1"/>
    <property type="molecule type" value="Genomic_DNA"/>
</dbReference>
<dbReference type="RefSeq" id="WP_001295305.1">
    <property type="nucleotide sequence ID" value="NC_007613.1"/>
</dbReference>
<dbReference type="SMR" id="Q324G4"/>
<dbReference type="GeneID" id="93776726"/>
<dbReference type="KEGG" id="sbo:SBO_0610"/>
<dbReference type="HOGENOM" id="CLU_033323_1_1_6"/>
<dbReference type="UniPathway" id="UPA00109">
    <property type="reaction ID" value="UER00186"/>
</dbReference>
<dbReference type="Proteomes" id="UP000007067">
    <property type="component" value="Chromosome"/>
</dbReference>
<dbReference type="GO" id="GO:0004619">
    <property type="term" value="F:phosphoglycerate mutase activity"/>
    <property type="evidence" value="ECO:0007669"/>
    <property type="project" value="UniProtKB-EC"/>
</dbReference>
<dbReference type="GO" id="GO:0006094">
    <property type="term" value="P:gluconeogenesis"/>
    <property type="evidence" value="ECO:0007669"/>
    <property type="project" value="UniProtKB-UniRule"/>
</dbReference>
<dbReference type="GO" id="GO:0006096">
    <property type="term" value="P:glycolytic process"/>
    <property type="evidence" value="ECO:0007669"/>
    <property type="project" value="UniProtKB-UniRule"/>
</dbReference>
<dbReference type="CDD" id="cd07067">
    <property type="entry name" value="HP_PGM_like"/>
    <property type="match status" value="1"/>
</dbReference>
<dbReference type="FunFam" id="3.40.50.1240:FF:000003">
    <property type="entry name" value="2,3-bisphosphoglycerate-dependent phosphoglycerate mutase"/>
    <property type="match status" value="1"/>
</dbReference>
<dbReference type="Gene3D" id="3.40.50.1240">
    <property type="entry name" value="Phosphoglycerate mutase-like"/>
    <property type="match status" value="1"/>
</dbReference>
<dbReference type="HAMAP" id="MF_01039">
    <property type="entry name" value="PGAM_GpmA"/>
    <property type="match status" value="1"/>
</dbReference>
<dbReference type="InterPro" id="IPR013078">
    <property type="entry name" value="His_Pase_superF_clade-1"/>
</dbReference>
<dbReference type="InterPro" id="IPR029033">
    <property type="entry name" value="His_PPase_superfam"/>
</dbReference>
<dbReference type="InterPro" id="IPR001345">
    <property type="entry name" value="PG/BPGM_mutase_AS"/>
</dbReference>
<dbReference type="InterPro" id="IPR005952">
    <property type="entry name" value="Phosphogly_mut1"/>
</dbReference>
<dbReference type="NCBIfam" id="TIGR01258">
    <property type="entry name" value="pgm_1"/>
    <property type="match status" value="1"/>
</dbReference>
<dbReference type="NCBIfam" id="NF010713">
    <property type="entry name" value="PRK14115.1"/>
    <property type="match status" value="1"/>
</dbReference>
<dbReference type="PANTHER" id="PTHR11931">
    <property type="entry name" value="PHOSPHOGLYCERATE MUTASE"/>
    <property type="match status" value="1"/>
</dbReference>
<dbReference type="Pfam" id="PF00300">
    <property type="entry name" value="His_Phos_1"/>
    <property type="match status" value="1"/>
</dbReference>
<dbReference type="PIRSF" id="PIRSF000709">
    <property type="entry name" value="6PFK_2-Ptase"/>
    <property type="match status" value="1"/>
</dbReference>
<dbReference type="SMART" id="SM00855">
    <property type="entry name" value="PGAM"/>
    <property type="match status" value="1"/>
</dbReference>
<dbReference type="SUPFAM" id="SSF53254">
    <property type="entry name" value="Phosphoglycerate mutase-like"/>
    <property type="match status" value="1"/>
</dbReference>
<dbReference type="PROSITE" id="PS00175">
    <property type="entry name" value="PG_MUTASE"/>
    <property type="match status" value="1"/>
</dbReference>
<feature type="chain" id="PRO_0000229140" description="2,3-bisphosphoglycerate-dependent phosphoglycerate mutase">
    <location>
        <begin position="1"/>
        <end position="250"/>
    </location>
</feature>
<feature type="active site" description="Tele-phosphohistidine intermediate" evidence="1">
    <location>
        <position position="11"/>
    </location>
</feature>
<feature type="active site" description="Proton donor/acceptor" evidence="1">
    <location>
        <position position="89"/>
    </location>
</feature>
<feature type="binding site" evidence="1">
    <location>
        <begin position="10"/>
        <end position="17"/>
    </location>
    <ligand>
        <name>substrate</name>
    </ligand>
</feature>
<feature type="binding site" evidence="1">
    <location>
        <begin position="23"/>
        <end position="24"/>
    </location>
    <ligand>
        <name>substrate</name>
    </ligand>
</feature>
<feature type="binding site" evidence="1">
    <location>
        <position position="62"/>
    </location>
    <ligand>
        <name>substrate</name>
    </ligand>
</feature>
<feature type="binding site" evidence="1">
    <location>
        <begin position="89"/>
        <end position="92"/>
    </location>
    <ligand>
        <name>substrate</name>
    </ligand>
</feature>
<feature type="binding site" evidence="1">
    <location>
        <position position="100"/>
    </location>
    <ligand>
        <name>substrate</name>
    </ligand>
</feature>
<feature type="binding site" evidence="1">
    <location>
        <begin position="116"/>
        <end position="117"/>
    </location>
    <ligand>
        <name>substrate</name>
    </ligand>
</feature>
<feature type="binding site" evidence="1">
    <location>
        <begin position="185"/>
        <end position="186"/>
    </location>
    <ligand>
        <name>substrate</name>
    </ligand>
</feature>
<feature type="site" description="Transition state stabilizer" evidence="1">
    <location>
        <position position="184"/>
    </location>
</feature>
<gene>
    <name evidence="1" type="primary">gpmA</name>
    <name type="ordered locus">SBO_0610</name>
</gene>